<keyword id="KW-0285">Flavoprotein</keyword>
<keyword id="KW-0288">FMN</keyword>
<keyword id="KW-0560">Oxidoreductase</keyword>
<keyword id="KW-0664">Pyridoxine biosynthesis</keyword>
<name>PDXH_ALISL</name>
<evidence type="ECO:0000255" key="1">
    <source>
        <dbReference type="HAMAP-Rule" id="MF_01629"/>
    </source>
</evidence>
<proteinExistence type="inferred from homology"/>
<dbReference type="EC" id="1.4.3.5" evidence="1"/>
<dbReference type="EMBL" id="FM178380">
    <property type="protein sequence ID" value="CAQ80775.1"/>
    <property type="molecule type" value="Genomic_DNA"/>
</dbReference>
<dbReference type="RefSeq" id="WP_012551466.1">
    <property type="nucleotide sequence ID" value="NC_011313.1"/>
</dbReference>
<dbReference type="SMR" id="B6EQ13"/>
<dbReference type="KEGG" id="vsa:VSAL_II0021"/>
<dbReference type="eggNOG" id="COG0259">
    <property type="taxonomic scope" value="Bacteria"/>
</dbReference>
<dbReference type="HOGENOM" id="CLU_032263_2_2_6"/>
<dbReference type="UniPathway" id="UPA01068">
    <property type="reaction ID" value="UER00304"/>
</dbReference>
<dbReference type="UniPathway" id="UPA01068">
    <property type="reaction ID" value="UER00305"/>
</dbReference>
<dbReference type="Proteomes" id="UP000001730">
    <property type="component" value="Chromosome 2"/>
</dbReference>
<dbReference type="GO" id="GO:0010181">
    <property type="term" value="F:FMN binding"/>
    <property type="evidence" value="ECO:0007669"/>
    <property type="project" value="UniProtKB-UniRule"/>
</dbReference>
<dbReference type="GO" id="GO:0004733">
    <property type="term" value="F:pyridoxamine phosphate oxidase activity"/>
    <property type="evidence" value="ECO:0007669"/>
    <property type="project" value="UniProtKB-UniRule"/>
</dbReference>
<dbReference type="GO" id="GO:0008615">
    <property type="term" value="P:pyridoxine biosynthetic process"/>
    <property type="evidence" value="ECO:0007669"/>
    <property type="project" value="UniProtKB-KW"/>
</dbReference>
<dbReference type="Gene3D" id="2.30.110.10">
    <property type="entry name" value="Electron Transport, Fmn-binding Protein, Chain A"/>
    <property type="match status" value="1"/>
</dbReference>
<dbReference type="HAMAP" id="MF_01629">
    <property type="entry name" value="PdxH"/>
    <property type="match status" value="1"/>
</dbReference>
<dbReference type="InterPro" id="IPR000659">
    <property type="entry name" value="Pyridox_Oxase"/>
</dbReference>
<dbReference type="InterPro" id="IPR019740">
    <property type="entry name" value="Pyridox_Oxase_CS"/>
</dbReference>
<dbReference type="InterPro" id="IPR011576">
    <property type="entry name" value="Pyridox_Oxase_N"/>
</dbReference>
<dbReference type="InterPro" id="IPR019576">
    <property type="entry name" value="Pyridoxamine_oxidase_dimer_C"/>
</dbReference>
<dbReference type="InterPro" id="IPR012349">
    <property type="entry name" value="Split_barrel_FMN-bd"/>
</dbReference>
<dbReference type="NCBIfam" id="TIGR00558">
    <property type="entry name" value="pdxH"/>
    <property type="match status" value="1"/>
</dbReference>
<dbReference type="NCBIfam" id="NF004231">
    <property type="entry name" value="PRK05679.1"/>
    <property type="match status" value="1"/>
</dbReference>
<dbReference type="PANTHER" id="PTHR10851:SF0">
    <property type="entry name" value="PYRIDOXINE-5'-PHOSPHATE OXIDASE"/>
    <property type="match status" value="1"/>
</dbReference>
<dbReference type="PANTHER" id="PTHR10851">
    <property type="entry name" value="PYRIDOXINE-5-PHOSPHATE OXIDASE"/>
    <property type="match status" value="1"/>
</dbReference>
<dbReference type="Pfam" id="PF10590">
    <property type="entry name" value="PNP_phzG_C"/>
    <property type="match status" value="1"/>
</dbReference>
<dbReference type="Pfam" id="PF01243">
    <property type="entry name" value="PNPOx_N"/>
    <property type="match status" value="1"/>
</dbReference>
<dbReference type="PIRSF" id="PIRSF000190">
    <property type="entry name" value="Pyd_amn-ph_oxd"/>
    <property type="match status" value="1"/>
</dbReference>
<dbReference type="SUPFAM" id="SSF50475">
    <property type="entry name" value="FMN-binding split barrel"/>
    <property type="match status" value="1"/>
</dbReference>
<dbReference type="PROSITE" id="PS01064">
    <property type="entry name" value="PYRIDOX_OXIDASE"/>
    <property type="match status" value="1"/>
</dbReference>
<gene>
    <name evidence="1" type="primary">pdxH</name>
    <name type="ordered locus">VSAL_II0021</name>
</gene>
<organism>
    <name type="scientific">Aliivibrio salmonicida (strain LFI1238)</name>
    <name type="common">Vibrio salmonicida (strain LFI1238)</name>
    <dbReference type="NCBI Taxonomy" id="316275"/>
    <lineage>
        <taxon>Bacteria</taxon>
        <taxon>Pseudomonadati</taxon>
        <taxon>Pseudomonadota</taxon>
        <taxon>Gammaproteobacteria</taxon>
        <taxon>Vibrionales</taxon>
        <taxon>Vibrionaceae</taxon>
        <taxon>Aliivibrio</taxon>
    </lineage>
</organism>
<accession>B6EQ13</accession>
<protein>
    <recommendedName>
        <fullName evidence="1">Pyridoxine/pyridoxamine 5'-phosphate oxidase</fullName>
        <ecNumber evidence="1">1.4.3.5</ecNumber>
    </recommendedName>
    <alternativeName>
        <fullName evidence="1">PNP/PMP oxidase</fullName>
        <shortName evidence="1">PNPOx</shortName>
    </alternativeName>
    <alternativeName>
        <fullName evidence="1">Pyridoxal 5'-phosphate synthase</fullName>
    </alternativeName>
</protein>
<reference key="1">
    <citation type="journal article" date="2008" name="BMC Genomics">
        <title>The genome sequence of the fish pathogen Aliivibrio salmonicida strain LFI1238 shows extensive evidence of gene decay.</title>
        <authorList>
            <person name="Hjerde E."/>
            <person name="Lorentzen M.S."/>
            <person name="Holden M.T."/>
            <person name="Seeger K."/>
            <person name="Paulsen S."/>
            <person name="Bason N."/>
            <person name="Churcher C."/>
            <person name="Harris D."/>
            <person name="Norbertczak H."/>
            <person name="Quail M.A."/>
            <person name="Sanders S."/>
            <person name="Thurston S."/>
            <person name="Parkhill J."/>
            <person name="Willassen N.P."/>
            <person name="Thomson N.R."/>
        </authorList>
    </citation>
    <scope>NUCLEOTIDE SEQUENCE [LARGE SCALE GENOMIC DNA]</scope>
    <source>
        <strain>LFI1238</strain>
    </source>
</reference>
<comment type="function">
    <text evidence="1">Catalyzes the oxidation of either pyridoxine 5'-phosphate (PNP) or pyridoxamine 5'-phosphate (PMP) into pyridoxal 5'-phosphate (PLP).</text>
</comment>
<comment type="catalytic activity">
    <reaction evidence="1">
        <text>pyridoxamine 5'-phosphate + O2 + H2O = pyridoxal 5'-phosphate + H2O2 + NH4(+)</text>
        <dbReference type="Rhea" id="RHEA:15817"/>
        <dbReference type="ChEBI" id="CHEBI:15377"/>
        <dbReference type="ChEBI" id="CHEBI:15379"/>
        <dbReference type="ChEBI" id="CHEBI:16240"/>
        <dbReference type="ChEBI" id="CHEBI:28938"/>
        <dbReference type="ChEBI" id="CHEBI:58451"/>
        <dbReference type="ChEBI" id="CHEBI:597326"/>
        <dbReference type="EC" id="1.4.3.5"/>
    </reaction>
</comment>
<comment type="catalytic activity">
    <reaction evidence="1">
        <text>pyridoxine 5'-phosphate + O2 = pyridoxal 5'-phosphate + H2O2</text>
        <dbReference type="Rhea" id="RHEA:15149"/>
        <dbReference type="ChEBI" id="CHEBI:15379"/>
        <dbReference type="ChEBI" id="CHEBI:16240"/>
        <dbReference type="ChEBI" id="CHEBI:58589"/>
        <dbReference type="ChEBI" id="CHEBI:597326"/>
        <dbReference type="EC" id="1.4.3.5"/>
    </reaction>
</comment>
<comment type="cofactor">
    <cofactor evidence="1">
        <name>FMN</name>
        <dbReference type="ChEBI" id="CHEBI:58210"/>
    </cofactor>
    <text evidence="1">Binds 1 FMN per subunit.</text>
</comment>
<comment type="pathway">
    <text evidence="1">Cofactor metabolism; pyridoxal 5'-phosphate salvage; pyridoxal 5'-phosphate from pyridoxamine 5'-phosphate: step 1/1.</text>
</comment>
<comment type="pathway">
    <text evidence="1">Cofactor metabolism; pyridoxal 5'-phosphate salvage; pyridoxal 5'-phosphate from pyridoxine 5'-phosphate: step 1/1.</text>
</comment>
<comment type="subunit">
    <text evidence="1">Homodimer.</text>
</comment>
<comment type="similarity">
    <text evidence="1">Belongs to the pyridoxamine 5'-phosphate oxidase family.</text>
</comment>
<sequence>MELEDIRRDYSLGGLRRADLPQAPIELFELWLKQAVEAKLTDPTAMTVATVDKKGQPFQRIVLLKHFDSTGFVFYTNLASRKAQHLEDNSKISLHFPWHPLERQVHITGTAEKLTALENMKYFTSRPKESQIAAWASKQSSRLTARAALEGKYLELKQQFSKGEIPVPKFWGGFRVKIDSIEFWQGGDSRLHDRFLYSKDQDKWVIDRLAP</sequence>
<feature type="chain" id="PRO_1000186287" description="Pyridoxine/pyridoxamine 5'-phosphate oxidase">
    <location>
        <begin position="1"/>
        <end position="211"/>
    </location>
</feature>
<feature type="binding site" evidence="1">
    <location>
        <begin position="7"/>
        <end position="10"/>
    </location>
    <ligand>
        <name>substrate</name>
    </ligand>
</feature>
<feature type="binding site" evidence="1">
    <location>
        <begin position="60"/>
        <end position="65"/>
    </location>
    <ligand>
        <name>FMN</name>
        <dbReference type="ChEBI" id="CHEBI:58210"/>
    </ligand>
</feature>
<feature type="binding site" evidence="1">
    <location>
        <position position="65"/>
    </location>
    <ligand>
        <name>substrate</name>
    </ligand>
</feature>
<feature type="binding site" evidence="1">
    <location>
        <begin position="75"/>
        <end position="76"/>
    </location>
    <ligand>
        <name>FMN</name>
        <dbReference type="ChEBI" id="CHEBI:58210"/>
    </ligand>
</feature>
<feature type="binding site" evidence="1">
    <location>
        <position position="81"/>
    </location>
    <ligand>
        <name>FMN</name>
        <dbReference type="ChEBI" id="CHEBI:58210"/>
    </ligand>
</feature>
<feature type="binding site" evidence="1">
    <location>
        <position position="82"/>
    </location>
    <ligand>
        <name>FMN</name>
        <dbReference type="ChEBI" id="CHEBI:58210"/>
    </ligand>
</feature>
<feature type="binding site" evidence="1">
    <location>
        <position position="104"/>
    </location>
    <ligand>
        <name>FMN</name>
        <dbReference type="ChEBI" id="CHEBI:58210"/>
    </ligand>
</feature>
<feature type="binding site" evidence="1">
    <location>
        <position position="122"/>
    </location>
    <ligand>
        <name>substrate</name>
    </ligand>
</feature>
<feature type="binding site" evidence="1">
    <location>
        <position position="126"/>
    </location>
    <ligand>
        <name>substrate</name>
    </ligand>
</feature>
<feature type="binding site" evidence="1">
    <location>
        <position position="130"/>
    </location>
    <ligand>
        <name>substrate</name>
    </ligand>
</feature>
<feature type="binding site" evidence="1">
    <location>
        <begin position="139"/>
        <end position="140"/>
    </location>
    <ligand>
        <name>FMN</name>
        <dbReference type="ChEBI" id="CHEBI:58210"/>
    </ligand>
</feature>
<feature type="binding site" evidence="1">
    <location>
        <position position="184"/>
    </location>
    <ligand>
        <name>FMN</name>
        <dbReference type="ChEBI" id="CHEBI:58210"/>
    </ligand>
</feature>
<feature type="binding site" evidence="1">
    <location>
        <begin position="190"/>
        <end position="192"/>
    </location>
    <ligand>
        <name>substrate</name>
    </ligand>
</feature>
<feature type="binding site" evidence="1">
    <location>
        <position position="194"/>
    </location>
    <ligand>
        <name>FMN</name>
        <dbReference type="ChEBI" id="CHEBI:58210"/>
    </ligand>
</feature>